<sequence>MESQQLSQHSHISHGSACASVTSKEVHTNQDPLDVSASKTEECEKASTKANSQQTTTPASSAVPENPHHASPQTAQSHSPQNGPYPQQCMMTQNQANPSGWSFYGHPSMIPYTPYQMSPMYFPPGPQSQFPQYPSSVGTPLSTPSPESGNTFTDSSSADSDMTSTKKYVRPPPMLTSPNDFPNWVKTYIKFLQNSNLGGIIPTVNGKPVRQITDDELTFLYNTFQIFAPSQFLPTWVKDILSVDYTDIMKILSKSIEKMQSDTQEANDIVTLANLQYNGSTPADAFETKVTNIIDRLNNNGIHINNKVACQLIMRGLSGEYKFLRYTRHRHLNMTVAELFLDIHAIYEEQQGSRNSKPNYRRNPSDEKNDSRSYTNTTKPKVIARNPQKTNNSKSKTARAHNVSTSNNSPSTDNDSISKSTTEPIQLNNKHDLHLGQKLTESTVNHTNHSDDELPGHLLLDSGASRTLIRSAHHIHSASSNPDINVVDAQKRNIPINAIGDLQFHFQDNTKTSIKVLHTPNIAYDLLSLNELAAVDITACFTKNVLERSDGTVLAPIVKYGDFYWVSKKYLLPSNISVPTINNVHTSESTRKYPYPFIHRMLAHANAQTIRYSLKNNTITYFNESDVDWSSAIDYQCPDCLIGKSTKHRHIKGSRLKYQNSYEPFQYLHTDIFGPVHNLPKSAPSYFISFTDETTKFRWVYPLHDRREDSILDVFTTILAFIKNQFQASVLVIQMDRGSEYTNRTLHKFLEKNGITPCYTTTADSRAHGVAERLNRTLLDDCRTQLQCSGLPNHLWFSAIEFSTIVRNSLASPKSKKSARQHAGLAGLDISTLLPFGQPVIVNDHNPNSKIHPRGIPGYALHPSRNSYGYIIYLPSLKKTVDTTNYVILQGKESRLDQFNYDALTFDEDLNRLTASYQSFIASNEIQQSDDLNIESDHDFQSDIELHPEQPRNVLSKAVSPTDSTPPSTHTEDSKRVSKTNIRAPREVDPNISESNILPSKKRSSTPQISNIESTGSGGMHKLNVPLLAPMSQSNTHESSHASKSKDFRHSDSYSENETNHTNVPISSTGGTNNKTVPQISDQETEKRIIHRSPSIDASPPENNSSHNIVPIKTPTTVSEQNTEESIIADLPLPDLPPESPTEFPDPFKELPPINSRQTNSSLGGIGDSNAYTTINSKKRSLEDNETEIKVSRDTWNTKNMRSLEPPRSKKRIHLIAAVKAVKSIKPIRTTLRYDEAITYNKDIKEKEKYIEAYHKEVNQLLKMKTWDTDEYYDRKEIDPKRVINSMFIFNKKRDGTHKARFVARGDIQHPDTYDSGMQSNTVHHYALMTSLSLALDNNYYITQLDISSAYLYADIKEELYIRPPPHLGMNDKLIRLKKSLYGLKQSGANWYETIKSYLIQQCGMEEVRGWSCVFKNSQVTICLFVDDMVLFSKNLNSNKRIIEKLKMQYDTKIINLGESDEEIQYDILGLEIKYQRGKYMKLGMENSLTEKIPKLNVPLNPKGRKLSAPGQPGLYIDQQELELEEDDYKMKVHEMQKLIGLASYVGYKFRFDLLYYINTLAQHILFPSKQVLDMTYELIQFIWNTRDKQLIWHKSKPVKPTNKLVVISDASYGNQPYYKSQIGNIYLLNGKVIGGKSTKASLTCTSTTEAEIHAISESVPLLNNLSYLIQELDKKPITKGLLTDSKSTISIIISNNEEKFRNRFFGTKAMRLRDEVSGNHLHVCYIETKKNIADVMTKPLPIKTFKLLTNKWIH</sequence>
<feature type="chain" id="PRO_0000199564" description="Transposon Ty1-JR2 Gag-Pol polyprotein">
    <location>
        <begin position="1"/>
        <end position="1755"/>
    </location>
</feature>
<feature type="chain" id="PRO_0000279088" description="Capsid protein" evidence="1">
    <location>
        <begin position="1"/>
        <end position="401"/>
    </location>
</feature>
<feature type="chain" id="PRO_0000279089" description="Ty1 protease" evidence="1">
    <location>
        <begin position="402"/>
        <end position="582"/>
    </location>
</feature>
<feature type="chain" id="PRO_0000279090" description="Integrase" evidence="1">
    <location>
        <begin position="583"/>
        <end position="1217"/>
    </location>
</feature>
<feature type="chain" id="PRO_0000279091" description="Reverse transcriptase/ribonuclease H" evidence="1">
    <location>
        <begin position="1218"/>
        <end position="1755"/>
    </location>
</feature>
<feature type="domain" description="Integrase catalytic" evidence="3">
    <location>
        <begin position="660"/>
        <end position="835"/>
    </location>
</feature>
<feature type="domain" description="Reverse transcriptase Ty1/copia-type">
    <location>
        <begin position="1338"/>
        <end position="1476"/>
    </location>
</feature>
<feature type="domain" description="RNase H Ty1/copia-type">
    <location>
        <begin position="1610"/>
        <end position="1752"/>
    </location>
</feature>
<feature type="region of interest" description="Disordered" evidence="5">
    <location>
        <begin position="1"/>
        <end position="93"/>
    </location>
</feature>
<feature type="region of interest" description="Disordered" evidence="5">
    <location>
        <begin position="126"/>
        <end position="173"/>
    </location>
</feature>
<feature type="region of interest" description="RNA-binding" evidence="1">
    <location>
        <begin position="299"/>
        <end position="401"/>
    </location>
</feature>
<feature type="region of interest" description="Disordered" evidence="5">
    <location>
        <begin position="352"/>
        <end position="421"/>
    </location>
</feature>
<feature type="region of interest" description="Integrase-type zinc finger-like">
    <location>
        <begin position="583"/>
        <end position="640"/>
    </location>
</feature>
<feature type="region of interest" description="Disordered" evidence="5">
    <location>
        <begin position="956"/>
        <end position="1087"/>
    </location>
</feature>
<feature type="region of interest" description="Disordered" evidence="5">
    <location>
        <begin position="1092"/>
        <end position="1111"/>
    </location>
</feature>
<feature type="region of interest" description="Disordered" evidence="5">
    <location>
        <begin position="1130"/>
        <end position="1186"/>
    </location>
</feature>
<feature type="short sequence motif" description="Bipartite nuclear localization signal" evidence="1">
    <location>
        <begin position="1178"/>
        <end position="1212"/>
    </location>
</feature>
<feature type="compositionally biased region" description="Low complexity" evidence="5">
    <location>
        <begin position="1"/>
        <end position="16"/>
    </location>
</feature>
<feature type="compositionally biased region" description="Polar residues" evidence="5">
    <location>
        <begin position="48"/>
        <end position="60"/>
    </location>
</feature>
<feature type="compositionally biased region" description="Polar residues" evidence="5">
    <location>
        <begin position="71"/>
        <end position="93"/>
    </location>
</feature>
<feature type="compositionally biased region" description="Polar residues" evidence="5">
    <location>
        <begin position="127"/>
        <end position="152"/>
    </location>
</feature>
<feature type="compositionally biased region" description="Low complexity" evidence="5">
    <location>
        <begin position="153"/>
        <end position="165"/>
    </location>
</feature>
<feature type="compositionally biased region" description="Low complexity" evidence="5">
    <location>
        <begin position="402"/>
        <end position="418"/>
    </location>
</feature>
<feature type="compositionally biased region" description="Low complexity" evidence="5">
    <location>
        <begin position="960"/>
        <end position="969"/>
    </location>
</feature>
<feature type="compositionally biased region" description="Polar residues" evidence="5">
    <location>
        <begin position="1005"/>
        <end position="1015"/>
    </location>
</feature>
<feature type="compositionally biased region" description="Basic and acidic residues" evidence="5">
    <location>
        <begin position="1038"/>
        <end position="1053"/>
    </location>
</feature>
<feature type="compositionally biased region" description="Polar residues" evidence="5">
    <location>
        <begin position="1054"/>
        <end position="1082"/>
    </location>
</feature>
<feature type="compositionally biased region" description="Polar residues" evidence="5">
    <location>
        <begin position="1101"/>
        <end position="1111"/>
    </location>
</feature>
<feature type="active site" description="For protease activity; shared with dimeric partner" evidence="4">
    <location>
        <position position="461"/>
    </location>
</feature>
<feature type="binding site" evidence="3">
    <location>
        <position position="671"/>
    </location>
    <ligand>
        <name>Mg(2+)</name>
        <dbReference type="ChEBI" id="CHEBI:18420"/>
        <label>1</label>
        <note>catalytic; for integrase activity</note>
    </ligand>
</feature>
<feature type="binding site" evidence="3">
    <location>
        <position position="736"/>
    </location>
    <ligand>
        <name>Mg(2+)</name>
        <dbReference type="ChEBI" id="CHEBI:18420"/>
        <label>1</label>
        <note>catalytic; for integrase activity</note>
    </ligand>
</feature>
<feature type="binding site" evidence="3">
    <location>
        <position position="1346"/>
    </location>
    <ligand>
        <name>Mg(2+)</name>
        <dbReference type="ChEBI" id="CHEBI:18420"/>
        <label>2</label>
        <note>catalytic; for reverse transcriptase activity</note>
    </ligand>
</feature>
<feature type="binding site" evidence="3">
    <location>
        <position position="1427"/>
    </location>
    <ligand>
        <name>Mg(2+)</name>
        <dbReference type="ChEBI" id="CHEBI:18420"/>
        <label>2</label>
        <note>catalytic; for reverse transcriptase activity</note>
    </ligand>
</feature>
<feature type="binding site" evidence="3">
    <location>
        <position position="1428"/>
    </location>
    <ligand>
        <name>Mg(2+)</name>
        <dbReference type="ChEBI" id="CHEBI:18420"/>
        <label>2</label>
        <note>catalytic; for reverse transcriptase activity</note>
    </ligand>
</feature>
<feature type="binding site" evidence="3">
    <location>
        <position position="1610"/>
    </location>
    <ligand>
        <name>Mg(2+)</name>
        <dbReference type="ChEBI" id="CHEBI:18420"/>
        <label>3</label>
        <note>catalytic; for RNase H activity</note>
    </ligand>
</feature>
<feature type="binding site" evidence="3">
    <location>
        <position position="1652"/>
    </location>
    <ligand>
        <name>Mg(2+)</name>
        <dbReference type="ChEBI" id="CHEBI:18420"/>
        <label>3</label>
        <note>catalytic; for RNase H activity</note>
    </ligand>
</feature>
<feature type="binding site" evidence="3">
    <location>
        <position position="1685"/>
    </location>
    <ligand>
        <name>Mg(2+)</name>
        <dbReference type="ChEBI" id="CHEBI:18420"/>
        <label>3</label>
        <note>catalytic; for RNase H activity</note>
    </ligand>
</feature>
<feature type="site" description="Cleavage; by Ty1 protease" evidence="1">
    <location>
        <begin position="401"/>
        <end position="402"/>
    </location>
</feature>
<feature type="site" description="Cleavage; by Ty1 protease" evidence="1">
    <location>
        <begin position="582"/>
        <end position="583"/>
    </location>
</feature>
<feature type="site" description="Cleavage; by Ty1 protease" evidence="1">
    <location>
        <begin position="1217"/>
        <end position="1218"/>
    </location>
</feature>
<feature type="modified residue" description="Phosphoserine" evidence="2">
    <location>
        <position position="416"/>
    </location>
</feature>
<proteinExistence type="inferred from homology"/>
<protein>
    <recommendedName>
        <fullName>Transposon Ty1-JR2 Gag-Pol polyprotein</fullName>
    </recommendedName>
    <alternativeName>
        <fullName>Gag-Pol-p199</fullName>
    </alternativeName>
    <alternativeName>
        <fullName>TY1A-TY1B</fullName>
    </alternativeName>
    <alternativeName>
        <fullName>Transposon Ty1 TYA-TYB polyprotein</fullName>
    </alternativeName>
    <alternativeName>
        <fullName>p190</fullName>
    </alternativeName>
    <component>
        <recommendedName>
            <fullName>Capsid protein</fullName>
            <shortName>CA</shortName>
        </recommendedName>
        <alternativeName>
            <fullName>Gag-p45</fullName>
        </alternativeName>
        <alternativeName>
            <fullName>p54</fullName>
        </alternativeName>
    </component>
    <component>
        <recommendedName>
            <fullName>Ty1 protease</fullName>
            <shortName>PR</shortName>
            <ecNumber>3.4.23.-</ecNumber>
        </recommendedName>
        <alternativeName>
            <fullName>Pol-p20</fullName>
        </alternativeName>
        <alternativeName>
            <fullName>p23</fullName>
        </alternativeName>
    </component>
    <component>
        <recommendedName>
            <fullName>Integrase</fullName>
            <shortName>IN</shortName>
        </recommendedName>
        <alternativeName>
            <fullName>Pol-p71</fullName>
        </alternativeName>
        <alternativeName>
            <fullName>p84</fullName>
        </alternativeName>
        <alternativeName>
            <fullName>p90</fullName>
        </alternativeName>
    </component>
    <component>
        <recommendedName>
            <fullName>Reverse transcriptase/ribonuclease H</fullName>
            <shortName>RT</shortName>
            <shortName>RT-RH</shortName>
            <ecNumber>2.7.7.49</ecNumber>
            <ecNumber>2.7.7.7</ecNumber>
            <ecNumber>3.1.26.4</ecNumber>
        </recommendedName>
        <alternativeName>
            <fullName>Pol-p63</fullName>
        </alternativeName>
        <alternativeName>
            <fullName>p60</fullName>
        </alternativeName>
    </component>
</protein>
<gene>
    <name type="primary">TY1B-JR2</name>
    <name type="synonym">YJRWTy1-2 POL</name>
    <name type="ordered locus">YJR029W</name>
    <name type="ORF">J1570</name>
</gene>
<keyword id="KW-0064">Aspartyl protease</keyword>
<keyword id="KW-0067">ATP-binding</keyword>
<keyword id="KW-0963">Cytoplasm</keyword>
<keyword id="KW-0229">DNA integration</keyword>
<keyword id="KW-0233">DNA recombination</keyword>
<keyword id="KW-0238">DNA-binding</keyword>
<keyword id="KW-0239">DNA-directed DNA polymerase</keyword>
<keyword id="KW-0255">Endonuclease</keyword>
<keyword id="KW-0378">Hydrolase</keyword>
<keyword id="KW-0460">Magnesium</keyword>
<keyword id="KW-0479">Metal-binding</keyword>
<keyword id="KW-0511">Multifunctional enzyme</keyword>
<keyword id="KW-0540">Nuclease</keyword>
<keyword id="KW-0547">Nucleotide-binding</keyword>
<keyword id="KW-0548">Nucleotidyltransferase</keyword>
<keyword id="KW-0539">Nucleus</keyword>
<keyword id="KW-0597">Phosphoprotein</keyword>
<keyword id="KW-0645">Protease</keyword>
<keyword id="KW-1185">Reference proteome</keyword>
<keyword id="KW-0688">Ribosomal frameshifting</keyword>
<keyword id="KW-0694">RNA-binding</keyword>
<keyword id="KW-0695">RNA-directed DNA polymerase</keyword>
<keyword id="KW-0808">Transferase</keyword>
<keyword id="KW-0814">Transposable element</keyword>
<keyword id="KW-0815">Transposition</keyword>
<keyword id="KW-1188">Viral release from host cell</keyword>
<keyword id="KW-0917">Virion maturation</keyword>
<keyword id="KW-0862">Zinc</keyword>
<keyword id="KW-0863">Zinc-finger</keyword>
<evidence type="ECO:0000250" key="1"/>
<evidence type="ECO:0000250" key="2">
    <source>
        <dbReference type="UniProtKB" id="Q99231"/>
    </source>
</evidence>
<evidence type="ECO:0000255" key="3">
    <source>
        <dbReference type="PROSITE-ProRule" id="PRU00457"/>
    </source>
</evidence>
<evidence type="ECO:0000255" key="4">
    <source>
        <dbReference type="PROSITE-ProRule" id="PRU10094"/>
    </source>
</evidence>
<evidence type="ECO:0000256" key="5">
    <source>
        <dbReference type="SAM" id="MobiDB-lite"/>
    </source>
</evidence>
<evidence type="ECO:0000305" key="6"/>
<organism>
    <name type="scientific">Saccharomyces cerevisiae (strain ATCC 204508 / S288c)</name>
    <name type="common">Baker's yeast</name>
    <dbReference type="NCBI Taxonomy" id="559292"/>
    <lineage>
        <taxon>Eukaryota</taxon>
        <taxon>Fungi</taxon>
        <taxon>Dikarya</taxon>
        <taxon>Ascomycota</taxon>
        <taxon>Saccharomycotina</taxon>
        <taxon>Saccharomycetes</taxon>
        <taxon>Saccharomycetales</taxon>
        <taxon>Saccharomycetaceae</taxon>
        <taxon>Saccharomyces</taxon>
    </lineage>
</organism>
<reference key="1">
    <citation type="journal article" date="1995" name="Yeast">
        <title>The sequence of 24.3 kb from chromosome X reveals five complete open reading frames, all of which correspond to new genes, and a tandem insertion of a Ty1 transposon.</title>
        <authorList>
            <person name="Zagulski M."/>
            <person name="Babinska B."/>
            <person name="Gromadka R."/>
            <person name="Migdalski A."/>
            <person name="Rytka J."/>
            <person name="Sulicka J."/>
            <person name="Herbert C.J."/>
        </authorList>
    </citation>
    <scope>NUCLEOTIDE SEQUENCE [GENOMIC DNA]</scope>
</reference>
<reference key="2">
    <citation type="journal article" date="1996" name="EMBO J.">
        <title>Complete nucleotide sequence of Saccharomyces cerevisiae chromosome X.</title>
        <authorList>
            <person name="Galibert F."/>
            <person name="Alexandraki D."/>
            <person name="Baur A."/>
            <person name="Boles E."/>
            <person name="Chalwatzis N."/>
            <person name="Chuat J.-C."/>
            <person name="Coster F."/>
            <person name="Cziepluch C."/>
            <person name="de Haan M."/>
            <person name="Domdey H."/>
            <person name="Durand P."/>
            <person name="Entian K.-D."/>
            <person name="Gatius M."/>
            <person name="Goffeau A."/>
            <person name="Grivell L.A."/>
            <person name="Hennemann A."/>
            <person name="Herbert C.J."/>
            <person name="Heumann K."/>
            <person name="Hilger F."/>
            <person name="Hollenberg C.P."/>
            <person name="Huang M.-E."/>
            <person name="Jacq C."/>
            <person name="Jauniaux J.-C."/>
            <person name="Katsoulou C."/>
            <person name="Kirchrath L."/>
            <person name="Kleine K."/>
            <person name="Kordes E."/>
            <person name="Koetter P."/>
            <person name="Liebl S."/>
            <person name="Louis E.J."/>
            <person name="Manus V."/>
            <person name="Mewes H.-W."/>
            <person name="Miosga T."/>
            <person name="Obermaier B."/>
            <person name="Perea J."/>
            <person name="Pohl T.M."/>
            <person name="Portetelle D."/>
            <person name="Pujol A."/>
            <person name="Purnelle B."/>
            <person name="Ramezani Rad M."/>
            <person name="Rasmussen S.W."/>
            <person name="Rose M."/>
            <person name="Rossau R."/>
            <person name="Schaaff-Gerstenschlaeger I."/>
            <person name="Smits P.H.M."/>
            <person name="Scarcez T."/>
            <person name="Soriano N."/>
            <person name="To Van D."/>
            <person name="Tzermia M."/>
            <person name="Van Broekhoven A."/>
            <person name="Vandenbol M."/>
            <person name="Wedler H."/>
            <person name="von Wettstein D."/>
            <person name="Wambutt R."/>
            <person name="Zagulski M."/>
            <person name="Zollner A."/>
            <person name="Karpfinger-Hartl L."/>
        </authorList>
    </citation>
    <scope>NUCLEOTIDE SEQUENCE [LARGE SCALE GENOMIC DNA]</scope>
    <source>
        <strain>ATCC 204508 / S288c</strain>
    </source>
</reference>
<reference key="3">
    <citation type="journal article" date="2014" name="G3 (Bethesda)">
        <title>The reference genome sequence of Saccharomyces cerevisiae: Then and now.</title>
        <authorList>
            <person name="Engel S.R."/>
            <person name="Dietrich F.S."/>
            <person name="Fisk D.G."/>
            <person name="Binkley G."/>
            <person name="Balakrishnan R."/>
            <person name="Costanzo M.C."/>
            <person name="Dwight S.S."/>
            <person name="Hitz B.C."/>
            <person name="Karra K."/>
            <person name="Nash R.S."/>
            <person name="Weng S."/>
            <person name="Wong E.D."/>
            <person name="Lloyd P."/>
            <person name="Skrzypek M.S."/>
            <person name="Miyasato S.R."/>
            <person name="Simison M."/>
            <person name="Cherry J.M."/>
        </authorList>
    </citation>
    <scope>GENOME REANNOTATION</scope>
    <source>
        <strain>ATCC 204508 / S288c</strain>
    </source>
</reference>
<reference key="4">
    <citation type="journal article" date="1998" name="Genome Res.">
        <title>Transposable elements and genome organization: a comprehensive survey of retrotransposons revealed by the complete Saccharomyces cerevisiae genome sequence.</title>
        <authorList>
            <person name="Kim J.M."/>
            <person name="Vanguri S."/>
            <person name="Boeke J.D."/>
            <person name="Gabriel A."/>
            <person name="Voytas D.F."/>
        </authorList>
    </citation>
    <scope>NOMENCLATURE</scope>
</reference>
<reference key="5">
    <citation type="journal article" date="2005" name="Cytogenet. Genome Res.">
        <title>Happy together: the life and times of Ty retrotransposons and their hosts.</title>
        <authorList>
            <person name="Lesage P."/>
            <person name="Todeschini A.L."/>
        </authorList>
    </citation>
    <scope>REVIEW</scope>
</reference>
<reference key="6">
    <citation type="journal article" date="2005" name="Cytogenet. Genome Res.">
        <title>Reverse transcriptase and integrase of the Saccharomyces cerevisiae Ty1 element.</title>
        <authorList>
            <person name="Wilhelm F.-X."/>
            <person name="Wilhelm M."/>
            <person name="Gabriel A."/>
        </authorList>
    </citation>
    <scope>REVIEW</scope>
    <scope>DOMAINS</scope>
</reference>
<dbReference type="EC" id="3.4.23.-"/>
<dbReference type="EC" id="2.7.7.49"/>
<dbReference type="EC" id="2.7.7.7"/>
<dbReference type="EC" id="3.1.26.4"/>
<dbReference type="EMBL" id="X87297">
    <property type="status" value="NOT_ANNOTATED_CDS"/>
    <property type="molecule type" value="Genomic_DNA"/>
</dbReference>
<dbReference type="EMBL" id="Z49528">
    <property type="protein sequence ID" value="CAA89556.1"/>
    <property type="status" value="ALT_SEQ"/>
    <property type="molecule type" value="Genomic_DNA"/>
</dbReference>
<dbReference type="EMBL" id="BK006943">
    <property type="protein sequence ID" value="DAA08817.1"/>
    <property type="molecule type" value="Genomic_DNA"/>
</dbReference>
<dbReference type="PIR" id="S40969">
    <property type="entry name" value="S40969"/>
</dbReference>
<dbReference type="PIR" id="S57047">
    <property type="entry name" value="S57047"/>
</dbReference>
<dbReference type="RefSeq" id="NP_012562.1">
    <molecule id="P47100-1"/>
    <property type="nucleotide sequence ID" value="NM_001181687.2"/>
</dbReference>
<dbReference type="SMR" id="P47100"/>
<dbReference type="BioGRID" id="33782">
    <property type="interactions" value="21"/>
</dbReference>
<dbReference type="DIP" id="DIP-6414N"/>
<dbReference type="FunCoup" id="P47100">
    <property type="interactions" value="148"/>
</dbReference>
<dbReference type="IntAct" id="P47100">
    <property type="interactions" value="9"/>
</dbReference>
<dbReference type="MINT" id="P47100"/>
<dbReference type="GlyGen" id="P47100">
    <property type="glycosylation" value="4 sites, 1 O-linked glycan (1 site)"/>
</dbReference>
<dbReference type="iPTMnet" id="P47100"/>
<dbReference type="PaxDb" id="4932-YJR029W"/>
<dbReference type="PeptideAtlas" id="P47100"/>
<dbReference type="GeneID" id="853486"/>
<dbReference type="KEGG" id="sce:YJR029W"/>
<dbReference type="AGR" id="SGD:S000003790"/>
<dbReference type="SGD" id="S000003790">
    <property type="gene designation" value="YJR029W"/>
</dbReference>
<dbReference type="VEuPathDB" id="FungiDB:YJR029W"/>
<dbReference type="eggNOG" id="KOG0017">
    <property type="taxonomic scope" value="Eukaryota"/>
</dbReference>
<dbReference type="HOGENOM" id="CLU_244151_0_0_1"/>
<dbReference type="InParanoid" id="P47100"/>
<dbReference type="OrthoDB" id="5423336at2759"/>
<dbReference type="Proteomes" id="UP000002311">
    <property type="component" value="Chromosome X"/>
</dbReference>
<dbReference type="RNAct" id="P47100">
    <property type="molecule type" value="protein"/>
</dbReference>
<dbReference type="GO" id="GO:0005737">
    <property type="term" value="C:cytoplasm"/>
    <property type="evidence" value="ECO:0007669"/>
    <property type="project" value="UniProtKB-SubCell"/>
</dbReference>
<dbReference type="GO" id="GO:0005634">
    <property type="term" value="C:nucleus"/>
    <property type="evidence" value="ECO:0000314"/>
    <property type="project" value="SGD"/>
</dbReference>
<dbReference type="GO" id="GO:0004190">
    <property type="term" value="F:aspartic-type endopeptidase activity"/>
    <property type="evidence" value="ECO:0007669"/>
    <property type="project" value="UniProtKB-KW"/>
</dbReference>
<dbReference type="GO" id="GO:0005524">
    <property type="term" value="F:ATP binding"/>
    <property type="evidence" value="ECO:0007669"/>
    <property type="project" value="UniProtKB-KW"/>
</dbReference>
<dbReference type="GO" id="GO:0003677">
    <property type="term" value="F:DNA binding"/>
    <property type="evidence" value="ECO:0007669"/>
    <property type="project" value="UniProtKB-KW"/>
</dbReference>
<dbReference type="GO" id="GO:0003887">
    <property type="term" value="F:DNA-directed DNA polymerase activity"/>
    <property type="evidence" value="ECO:0007669"/>
    <property type="project" value="UniProtKB-KW"/>
</dbReference>
<dbReference type="GO" id="GO:0003723">
    <property type="term" value="F:RNA binding"/>
    <property type="evidence" value="ECO:0007669"/>
    <property type="project" value="UniProtKB-KW"/>
</dbReference>
<dbReference type="GO" id="GO:0003964">
    <property type="term" value="F:RNA-directed DNA polymerase activity"/>
    <property type="evidence" value="ECO:0007669"/>
    <property type="project" value="UniProtKB-KW"/>
</dbReference>
<dbReference type="GO" id="GO:0004523">
    <property type="term" value="F:RNA-DNA hybrid ribonuclease activity"/>
    <property type="evidence" value="ECO:0007669"/>
    <property type="project" value="UniProtKB-EC"/>
</dbReference>
<dbReference type="GO" id="GO:0008270">
    <property type="term" value="F:zinc ion binding"/>
    <property type="evidence" value="ECO:0007669"/>
    <property type="project" value="UniProtKB-KW"/>
</dbReference>
<dbReference type="GO" id="GO:0015074">
    <property type="term" value="P:DNA integration"/>
    <property type="evidence" value="ECO:0007669"/>
    <property type="project" value="UniProtKB-KW"/>
</dbReference>
<dbReference type="GO" id="GO:0006310">
    <property type="term" value="P:DNA recombination"/>
    <property type="evidence" value="ECO:0007669"/>
    <property type="project" value="UniProtKB-KW"/>
</dbReference>
<dbReference type="GO" id="GO:0006508">
    <property type="term" value="P:proteolysis"/>
    <property type="evidence" value="ECO:0007669"/>
    <property type="project" value="UniProtKB-KW"/>
</dbReference>
<dbReference type="GO" id="GO:0032196">
    <property type="term" value="P:transposition"/>
    <property type="evidence" value="ECO:0007669"/>
    <property type="project" value="UniProtKB-KW"/>
</dbReference>
<dbReference type="GO" id="GO:0075523">
    <property type="term" value="P:viral translational frameshifting"/>
    <property type="evidence" value="ECO:0007669"/>
    <property type="project" value="UniProtKB-KW"/>
</dbReference>
<dbReference type="CDD" id="cd09272">
    <property type="entry name" value="RNase_HI_RT_Ty1"/>
    <property type="match status" value="1"/>
</dbReference>
<dbReference type="FunFam" id="3.30.420.10:FF:000050">
    <property type="entry name" value="Transposon Ty2-DR3 Gag-Pol polyprotein"/>
    <property type="match status" value="1"/>
</dbReference>
<dbReference type="Gene3D" id="3.30.420.10">
    <property type="entry name" value="Ribonuclease H-like superfamily/Ribonuclease H"/>
    <property type="match status" value="1"/>
</dbReference>
<dbReference type="InterPro" id="IPR001969">
    <property type="entry name" value="Aspartic_peptidase_AS"/>
</dbReference>
<dbReference type="InterPro" id="IPR043502">
    <property type="entry name" value="DNA/RNA_pol_sf"/>
</dbReference>
<dbReference type="InterPro" id="IPR001584">
    <property type="entry name" value="Integrase_cat-core"/>
</dbReference>
<dbReference type="InterPro" id="IPR039537">
    <property type="entry name" value="Retrotran_Ty1/copia-like"/>
</dbReference>
<dbReference type="InterPro" id="IPR012337">
    <property type="entry name" value="RNaseH-like_sf"/>
</dbReference>
<dbReference type="InterPro" id="IPR036397">
    <property type="entry name" value="RNaseH_sf"/>
</dbReference>
<dbReference type="InterPro" id="IPR013103">
    <property type="entry name" value="RVT_2"/>
</dbReference>
<dbReference type="InterPro" id="IPR015820">
    <property type="entry name" value="TYA"/>
</dbReference>
<dbReference type="PANTHER" id="PTHR42648">
    <property type="entry name" value="TRANSPOSASE, PUTATIVE-RELATED"/>
    <property type="match status" value="1"/>
</dbReference>
<dbReference type="PANTHER" id="PTHR42648:SF11">
    <property type="entry name" value="TRANSPOSON TY4-P GAG-POL POLYPROTEIN"/>
    <property type="match status" value="1"/>
</dbReference>
<dbReference type="Pfam" id="PF00665">
    <property type="entry name" value="rve"/>
    <property type="match status" value="1"/>
</dbReference>
<dbReference type="Pfam" id="PF07727">
    <property type="entry name" value="RVT_2"/>
    <property type="match status" value="1"/>
</dbReference>
<dbReference type="Pfam" id="PF01021">
    <property type="entry name" value="TYA"/>
    <property type="match status" value="1"/>
</dbReference>
<dbReference type="SUPFAM" id="SSF56672">
    <property type="entry name" value="DNA/RNA polymerases"/>
    <property type="match status" value="1"/>
</dbReference>
<dbReference type="SUPFAM" id="SSF53098">
    <property type="entry name" value="Ribonuclease H-like"/>
    <property type="match status" value="1"/>
</dbReference>
<dbReference type="PROSITE" id="PS00141">
    <property type="entry name" value="ASP_PROTEASE"/>
    <property type="match status" value="1"/>
</dbReference>
<dbReference type="PROSITE" id="PS50994">
    <property type="entry name" value="INTEGRASE"/>
    <property type="match status" value="1"/>
</dbReference>
<accession>P47100</accession>
<accession>D6VWK1</accession>
<accession>P87195</accession>
<comment type="function">
    <text evidence="1">Capsid protein (CA) is the structural component of the virus-like particle (VLP), forming the shell that encapsulates the retrotransposons dimeric RNA genome. The particles are assembled from trimer-clustered units and there are holes in the capsid shells that allow for the diffusion of macromolecules. CA also has nucleocapsid-like chaperone activity, promoting primer tRNA(i)-Met annealing to the multipartite primer-binding site (PBS), dimerization of Ty1 RNA and initiation of reverse transcription (By similarity).</text>
</comment>
<comment type="function">
    <text evidence="1">The aspartyl protease (PR) mediates the proteolytic cleavages of the Gag and Gag-Pol polyproteins after assembly of the VLP.</text>
</comment>
<comment type="function">
    <text evidence="1">Reverse transcriptase/ribonuclease H (RT) is a multifunctional enzyme that catalyzes the conversion of the retro-elements RNA genome into dsDNA within the VLP. The enzyme displays a DNA polymerase activity that can copy either DNA or RNA templates, and a ribonuclease H (RNase H) activity that cleaves the RNA strand of RNA-DNA heteroduplexes during plus-strand synthesis and hydrolyzes RNA primers. The conversion leads to a linear dsDNA copy of the retrotransposon that includes long terminal repeats (LTRs) at both ends (By similarity).</text>
</comment>
<comment type="function">
    <text evidence="1">Integrase (IN) targets the VLP to the nucleus, where a subparticle preintegration complex (PIC) containing at least integrase and the newly synthesized dsDNA copy of the retrotransposon must transit the nuclear membrane. Once in the nucleus, integrase performs the integration of the dsDNA into the host genome (By similarity).</text>
</comment>
<comment type="catalytic activity">
    <reaction>
        <text>DNA(n) + a 2'-deoxyribonucleoside 5'-triphosphate = DNA(n+1) + diphosphate</text>
        <dbReference type="Rhea" id="RHEA:22508"/>
        <dbReference type="Rhea" id="RHEA-COMP:17339"/>
        <dbReference type="Rhea" id="RHEA-COMP:17340"/>
        <dbReference type="ChEBI" id="CHEBI:33019"/>
        <dbReference type="ChEBI" id="CHEBI:61560"/>
        <dbReference type="ChEBI" id="CHEBI:173112"/>
        <dbReference type="EC" id="2.7.7.49"/>
    </reaction>
</comment>
<comment type="catalytic activity">
    <reaction>
        <text>DNA(n) + a 2'-deoxyribonucleoside 5'-triphosphate = DNA(n+1) + diphosphate</text>
        <dbReference type="Rhea" id="RHEA:22508"/>
        <dbReference type="Rhea" id="RHEA-COMP:17339"/>
        <dbReference type="Rhea" id="RHEA-COMP:17340"/>
        <dbReference type="ChEBI" id="CHEBI:33019"/>
        <dbReference type="ChEBI" id="CHEBI:61560"/>
        <dbReference type="ChEBI" id="CHEBI:173112"/>
        <dbReference type="EC" id="2.7.7.7"/>
    </reaction>
</comment>
<comment type="catalytic activity">
    <reaction>
        <text>Endonucleolytic cleavage to 5'-phosphomonoester.</text>
        <dbReference type="EC" id="3.1.26.4"/>
    </reaction>
</comment>
<comment type="subunit">
    <text evidence="1">The capsid protein forms a homotrimer, from which the VLPs are assembled. The protease is a homodimer, whose active site consists of two apposed aspartic acid residues (By similarity).</text>
</comment>
<comment type="subcellular location">
    <subcellularLocation>
        <location>Cytoplasm</location>
    </subcellularLocation>
    <subcellularLocation>
        <location evidence="1">Nucleus</location>
    </subcellularLocation>
</comment>
<comment type="alternative products">
    <event type="ribosomal frameshifting"/>
    <isoform>
        <id>P47100-1</id>
        <name>Transposon Ty1-JR2 Gag-Pol polyprotein</name>
        <sequence type="displayed"/>
    </isoform>
    <isoform>
        <id>P47099-1</id>
        <name>Transposon Ty1-JR2 Gag polyprotein</name>
        <sequence type="external"/>
    </isoform>
    <text evidence="1">The Gag-Pol polyprotein is generated by a +1 ribosomal frameshift. The ratio of Gag:Gag-Pol varies between 20:1 and 5:1 (By similarity).</text>
</comment>
<comment type="domain">
    <text evidence="1">The C-terminal RNA-binding region of CA is sufficient for all its nucleocapsid-like chaperone activities.</text>
</comment>
<comment type="domain">
    <text evidence="1">Integrase core domain contains the D-x(n)-D-x(35)-E motif, named for the phylogenetically conserved glutamic acid and aspartic acid residues and the invariant 35 amino acid spacing between the second and third acidic residues. Each acidic residue of the D,D(35)E motif is independently essential for the 3'-processing and strand transfer activities of purified integrase protein (By similarity).</text>
</comment>
<comment type="PTM">
    <text evidence="1">Initially, virus-like particles (VLPs) are composed of the structural unprocessed proteins Gag and Gag-Pol, and also contain the host initiator methionine tRNA (tRNA(i)-Met) which serves as a primer for minus-strand DNA synthesis, and a dimer of genomic Ty RNA. Processing of the polyproteins occurs within the particle and proceeds by an ordered pathway, called maturation. First, the protease (PR) is released by autocatalytic cleavage of the Gag-Pol polyprotein yielding capsid protein p45 and a Pol-p154 precursor protein. This cleavage is a prerequisite for subsequent processing of Pol-p154 at the remaining sites to release the mature structural and catalytic proteins. Maturation takes place prior to the RT reaction and is required to produce transposition-competent VLPs (By similarity).</text>
</comment>
<comment type="miscellaneous">
    <text>Retrotransposons are mobile genetic entities that are able to replicate via an RNA intermediate and a reverse transcription step. In contrast to retroviruses, retrotransposons are non-infectious, lack an envelope and remain intracellular. Ty1 retrotransposons belong to the copia elements (pseudoviridae).</text>
</comment>
<comment type="miscellaneous">
    <molecule>Isoform Transposon Ty1-JR2 Gag-Pol polyprotein</molecule>
    <text>Produced by +1 ribosomal frameshifting between codon Leu-435 and Gly-436 of the YJR028W ORF.</text>
</comment>
<comment type="sequence caution" evidence="6">
    <conflict type="erroneous gene model prediction">
        <sequence resource="EMBL-CDS" id="CAA89556"/>
    </conflict>
</comment>
<name>YJ12B_YEAST</name>